<protein>
    <recommendedName>
        <fullName evidence="1">1-(5-phosphoribosyl)-5-[(5-phosphoribosylamino)methylideneamino] imidazole-4-carboxamide isomerase</fullName>
        <ecNumber evidence="1">5.3.1.16</ecNumber>
    </recommendedName>
    <alternativeName>
        <fullName evidence="1">Phosphoribosylformimino-5-aminoimidazole carboxamide ribotide isomerase</fullName>
    </alternativeName>
</protein>
<accession>A1SL57</accession>
<organism>
    <name type="scientific">Nocardioides sp. (strain ATCC BAA-499 / JS614)</name>
    <dbReference type="NCBI Taxonomy" id="196162"/>
    <lineage>
        <taxon>Bacteria</taxon>
        <taxon>Bacillati</taxon>
        <taxon>Actinomycetota</taxon>
        <taxon>Actinomycetes</taxon>
        <taxon>Propionibacteriales</taxon>
        <taxon>Nocardioidaceae</taxon>
        <taxon>Nocardioides</taxon>
    </lineage>
</organism>
<evidence type="ECO:0000255" key="1">
    <source>
        <dbReference type="HAMAP-Rule" id="MF_01014"/>
    </source>
</evidence>
<name>HIS4_NOCSJ</name>
<proteinExistence type="inferred from homology"/>
<reference key="1">
    <citation type="submission" date="2006-12" db="EMBL/GenBank/DDBJ databases">
        <title>Complete sequence of chromosome 1 of Nocardioides sp. JS614.</title>
        <authorList>
            <person name="Copeland A."/>
            <person name="Lucas S."/>
            <person name="Lapidus A."/>
            <person name="Barry K."/>
            <person name="Detter J.C."/>
            <person name="Glavina del Rio T."/>
            <person name="Hammon N."/>
            <person name="Israni S."/>
            <person name="Dalin E."/>
            <person name="Tice H."/>
            <person name="Pitluck S."/>
            <person name="Thompson L.S."/>
            <person name="Brettin T."/>
            <person name="Bruce D."/>
            <person name="Han C."/>
            <person name="Tapia R."/>
            <person name="Schmutz J."/>
            <person name="Larimer F."/>
            <person name="Land M."/>
            <person name="Hauser L."/>
            <person name="Kyrpides N."/>
            <person name="Kim E."/>
            <person name="Mattes T."/>
            <person name="Gossett J."/>
            <person name="Richardson P."/>
        </authorList>
    </citation>
    <scope>NUCLEOTIDE SEQUENCE [LARGE SCALE GENOMIC DNA]</scope>
    <source>
        <strain>ATCC BAA-499 / JS614</strain>
    </source>
</reference>
<feature type="chain" id="PRO_0000290501" description="1-(5-phosphoribosyl)-5-[(5-phosphoribosylamino)methylideneamino] imidazole-4-carboxamide isomerase">
    <location>
        <begin position="1"/>
        <end position="244"/>
    </location>
</feature>
<feature type="active site" description="Proton acceptor" evidence="1">
    <location>
        <position position="12"/>
    </location>
</feature>
<feature type="active site" description="Proton donor" evidence="1">
    <location>
        <position position="131"/>
    </location>
</feature>
<comment type="catalytic activity">
    <reaction evidence="1">
        <text>1-(5-phospho-beta-D-ribosyl)-5-[(5-phospho-beta-D-ribosylamino)methylideneamino]imidazole-4-carboxamide = 5-[(5-phospho-1-deoxy-D-ribulos-1-ylimino)methylamino]-1-(5-phospho-beta-D-ribosyl)imidazole-4-carboxamide</text>
        <dbReference type="Rhea" id="RHEA:15469"/>
        <dbReference type="ChEBI" id="CHEBI:58435"/>
        <dbReference type="ChEBI" id="CHEBI:58525"/>
        <dbReference type="EC" id="5.3.1.16"/>
    </reaction>
</comment>
<comment type="pathway">
    <text evidence="1">Amino-acid biosynthesis; L-histidine biosynthesis; L-histidine from 5-phospho-alpha-D-ribose 1-diphosphate: step 4/9.</text>
</comment>
<comment type="subcellular location">
    <subcellularLocation>
        <location evidence="1">Cytoplasm</location>
    </subcellularLocation>
</comment>
<comment type="similarity">
    <text evidence="1">Belongs to the HisA/HisF family.</text>
</comment>
<dbReference type="EC" id="5.3.1.16" evidence="1"/>
<dbReference type="EMBL" id="CP000509">
    <property type="protein sequence ID" value="ABL82542.1"/>
    <property type="molecule type" value="Genomic_DNA"/>
</dbReference>
<dbReference type="SMR" id="A1SL57"/>
<dbReference type="STRING" id="196162.Noca_3040"/>
<dbReference type="KEGG" id="nca:Noca_3040"/>
<dbReference type="eggNOG" id="COG0106">
    <property type="taxonomic scope" value="Bacteria"/>
</dbReference>
<dbReference type="HOGENOM" id="CLU_048577_1_1_11"/>
<dbReference type="OrthoDB" id="9807749at2"/>
<dbReference type="UniPathway" id="UPA00031">
    <property type="reaction ID" value="UER00009"/>
</dbReference>
<dbReference type="Proteomes" id="UP000000640">
    <property type="component" value="Chromosome"/>
</dbReference>
<dbReference type="GO" id="GO:0005737">
    <property type="term" value="C:cytoplasm"/>
    <property type="evidence" value="ECO:0007669"/>
    <property type="project" value="UniProtKB-SubCell"/>
</dbReference>
<dbReference type="GO" id="GO:0003949">
    <property type="term" value="F:1-(5-phosphoribosyl)-5-[(5-phosphoribosylamino)methylideneamino]imidazole-4-carboxamide isomerase activity"/>
    <property type="evidence" value="ECO:0007669"/>
    <property type="project" value="UniProtKB-UniRule"/>
</dbReference>
<dbReference type="GO" id="GO:0004640">
    <property type="term" value="F:phosphoribosylanthranilate isomerase activity"/>
    <property type="evidence" value="ECO:0007669"/>
    <property type="project" value="InterPro"/>
</dbReference>
<dbReference type="GO" id="GO:0000105">
    <property type="term" value="P:L-histidine biosynthetic process"/>
    <property type="evidence" value="ECO:0007669"/>
    <property type="project" value="UniProtKB-UniRule"/>
</dbReference>
<dbReference type="GO" id="GO:0000162">
    <property type="term" value="P:L-tryptophan biosynthetic process"/>
    <property type="evidence" value="ECO:0007669"/>
    <property type="project" value="InterPro"/>
</dbReference>
<dbReference type="CDD" id="cd04732">
    <property type="entry name" value="HisA"/>
    <property type="match status" value="1"/>
</dbReference>
<dbReference type="FunFam" id="3.20.20.70:FF:000009">
    <property type="entry name" value="1-(5-phosphoribosyl)-5-[(5-phosphoribosylamino)methylideneamino] imidazole-4-carboxamide isomerase"/>
    <property type="match status" value="1"/>
</dbReference>
<dbReference type="Gene3D" id="3.20.20.70">
    <property type="entry name" value="Aldolase class I"/>
    <property type="match status" value="1"/>
</dbReference>
<dbReference type="HAMAP" id="MF_01014">
    <property type="entry name" value="HisA"/>
    <property type="match status" value="1"/>
</dbReference>
<dbReference type="InterPro" id="IPR013785">
    <property type="entry name" value="Aldolase_TIM"/>
</dbReference>
<dbReference type="InterPro" id="IPR006062">
    <property type="entry name" value="His_biosynth"/>
</dbReference>
<dbReference type="InterPro" id="IPR010188">
    <property type="entry name" value="HisA/PriA_Actinobacteria"/>
</dbReference>
<dbReference type="InterPro" id="IPR044524">
    <property type="entry name" value="Isoase_HisA-like"/>
</dbReference>
<dbReference type="InterPro" id="IPR023016">
    <property type="entry name" value="Isoase_HisA-like_bact"/>
</dbReference>
<dbReference type="InterPro" id="IPR011060">
    <property type="entry name" value="RibuloseP-bd_barrel"/>
</dbReference>
<dbReference type="NCBIfam" id="TIGR01919">
    <property type="entry name" value="hisA-trpF"/>
    <property type="match status" value="1"/>
</dbReference>
<dbReference type="PANTHER" id="PTHR43090">
    <property type="entry name" value="1-(5-PHOSPHORIBOSYL)-5-[(5-PHOSPHORIBOSYLAMINO)METHYLIDENEAMINO] IMIDAZOLE-4-CARBOXAMIDE ISOMERASE"/>
    <property type="match status" value="1"/>
</dbReference>
<dbReference type="PANTHER" id="PTHR43090:SF2">
    <property type="entry name" value="1-(5-PHOSPHORIBOSYL)-5-[(5-PHOSPHORIBOSYLAMINO)METHYLIDENEAMINO] IMIDAZOLE-4-CARBOXAMIDE ISOMERASE"/>
    <property type="match status" value="1"/>
</dbReference>
<dbReference type="Pfam" id="PF00977">
    <property type="entry name" value="His_biosynth"/>
    <property type="match status" value="1"/>
</dbReference>
<dbReference type="SUPFAM" id="SSF51366">
    <property type="entry name" value="Ribulose-phoshate binding barrel"/>
    <property type="match status" value="1"/>
</dbReference>
<keyword id="KW-0028">Amino-acid biosynthesis</keyword>
<keyword id="KW-0963">Cytoplasm</keyword>
<keyword id="KW-0368">Histidine biosynthesis</keyword>
<keyword id="KW-0413">Isomerase</keyword>
<keyword id="KW-1185">Reference proteome</keyword>
<sequence length="244" mass="25749">MSDYLELLPAVDITEGRAVQLAQGVAGSERTYGDPVAAAMRWQEAGAEWIHLVDLDAAFGRGSNRELQAEIVGALDVQVEMSGGIRDDESLAAALATGCRRVNIGTAALEQPEWCRRVIAEHGDRVAIGLDVRGRTLAARGWTKDGGDLYETLARLDAEGCARYVVTDVNKDGMLQGPNLQLLRDVCAATSAPVVASGGVTTLADIEALMELVPVGVEGAIAGTALYEGRFTLEDALALTRGGR</sequence>
<gene>
    <name evidence="1" type="primary">hisA</name>
    <name type="ordered locus">Noca_3040</name>
</gene>